<organism>
    <name type="scientific">Thermoplasma acidophilum (strain ATCC 25905 / DSM 1728 / JCM 9062 / NBRC 15155 / AMRC-C165)</name>
    <dbReference type="NCBI Taxonomy" id="273075"/>
    <lineage>
        <taxon>Archaea</taxon>
        <taxon>Methanobacteriati</taxon>
        <taxon>Thermoplasmatota</taxon>
        <taxon>Thermoplasmata</taxon>
        <taxon>Thermoplasmatales</taxon>
        <taxon>Thermoplasmataceae</taxon>
        <taxon>Thermoplasma</taxon>
    </lineage>
</organism>
<dbReference type="EC" id="4.6.1.17" evidence="1"/>
<dbReference type="EMBL" id="AL445064">
    <property type="protein sequence ID" value="CAC11634.1"/>
    <property type="molecule type" value="Genomic_DNA"/>
</dbReference>
<dbReference type="RefSeq" id="WP_010900919.1">
    <property type="nucleotide sequence ID" value="NC_002578.1"/>
</dbReference>
<dbReference type="SMR" id="Q9HKV1"/>
<dbReference type="FunCoup" id="Q9HKV1">
    <property type="interactions" value="57"/>
</dbReference>
<dbReference type="STRING" id="273075.gene:9571712"/>
<dbReference type="PaxDb" id="273075-Ta0492"/>
<dbReference type="EnsemblBacteria" id="CAC11634">
    <property type="protein sequence ID" value="CAC11634"/>
    <property type="gene ID" value="CAC11634"/>
</dbReference>
<dbReference type="KEGG" id="tac:Ta0492"/>
<dbReference type="eggNOG" id="arCOG01530">
    <property type="taxonomic scope" value="Archaea"/>
</dbReference>
<dbReference type="HOGENOM" id="CLU_074693_1_2_2"/>
<dbReference type="InParanoid" id="Q9HKV1"/>
<dbReference type="OrthoDB" id="10067at2157"/>
<dbReference type="UniPathway" id="UPA00344"/>
<dbReference type="Proteomes" id="UP000001024">
    <property type="component" value="Chromosome"/>
</dbReference>
<dbReference type="GO" id="GO:0061799">
    <property type="term" value="F:cyclic pyranopterin monophosphate synthase activity"/>
    <property type="evidence" value="ECO:0007669"/>
    <property type="project" value="UniProtKB-UniRule"/>
</dbReference>
<dbReference type="GO" id="GO:0006777">
    <property type="term" value="P:Mo-molybdopterin cofactor biosynthetic process"/>
    <property type="evidence" value="ECO:0007669"/>
    <property type="project" value="UniProtKB-UniRule"/>
</dbReference>
<dbReference type="CDD" id="cd01419">
    <property type="entry name" value="MoaC_A"/>
    <property type="match status" value="1"/>
</dbReference>
<dbReference type="Gene3D" id="3.30.70.640">
    <property type="entry name" value="Molybdopterin cofactor biosynthesis C (MoaC) domain"/>
    <property type="match status" value="1"/>
</dbReference>
<dbReference type="HAMAP" id="MF_01224_A">
    <property type="entry name" value="MoaC_A"/>
    <property type="match status" value="1"/>
</dbReference>
<dbReference type="InterPro" id="IPR023047">
    <property type="entry name" value="Mo_CF_biosynth-C_arc"/>
</dbReference>
<dbReference type="InterPro" id="IPR036522">
    <property type="entry name" value="MoaC_sf"/>
</dbReference>
<dbReference type="InterPro" id="IPR002820">
    <property type="entry name" value="Mopterin_CF_biosynth-C_dom"/>
</dbReference>
<dbReference type="NCBIfam" id="NF008999">
    <property type="entry name" value="PRK12343.1"/>
    <property type="match status" value="1"/>
</dbReference>
<dbReference type="Pfam" id="PF01967">
    <property type="entry name" value="MoaC"/>
    <property type="match status" value="1"/>
</dbReference>
<dbReference type="SUPFAM" id="SSF55040">
    <property type="entry name" value="Molybdenum cofactor biosynthesis protein C, MoaC"/>
    <property type="match status" value="1"/>
</dbReference>
<gene>
    <name evidence="1" type="primary">moaC</name>
    <name type="ordered locus">Ta0492</name>
</gene>
<reference key="1">
    <citation type="journal article" date="2000" name="Nature">
        <title>The genome sequence of the thermoacidophilic scavenger Thermoplasma acidophilum.</title>
        <authorList>
            <person name="Ruepp A."/>
            <person name="Graml W."/>
            <person name="Santos-Martinez M.-L."/>
            <person name="Koretke K.K."/>
            <person name="Volker C."/>
            <person name="Mewes H.-W."/>
            <person name="Frishman D."/>
            <person name="Stocker S."/>
            <person name="Lupas A.N."/>
            <person name="Baumeister W."/>
        </authorList>
    </citation>
    <scope>NUCLEOTIDE SEQUENCE [LARGE SCALE GENOMIC DNA]</scope>
    <source>
        <strain>ATCC 25905 / DSM 1728 / JCM 9062 / NBRC 15155 / AMRC-C165</strain>
    </source>
</reference>
<evidence type="ECO:0000255" key="1">
    <source>
        <dbReference type="HAMAP-Rule" id="MF_01224"/>
    </source>
</evidence>
<keyword id="KW-0456">Lyase</keyword>
<keyword id="KW-0501">Molybdenum cofactor biosynthesis</keyword>
<keyword id="KW-1185">Reference proteome</keyword>
<name>MOAC_THEAC</name>
<accession>Q9HKV1</accession>
<feature type="chain" id="PRO_0000097866" description="Probable cyclic pyranopterin monophosphate synthase">
    <location>
        <begin position="1"/>
        <end position="143"/>
    </location>
</feature>
<feature type="active site" evidence="1">
    <location>
        <position position="112"/>
    </location>
</feature>
<feature type="binding site" evidence="1">
    <location>
        <begin position="61"/>
        <end position="63"/>
    </location>
    <ligand>
        <name>substrate</name>
    </ligand>
</feature>
<feature type="binding site" evidence="1">
    <location>
        <begin position="97"/>
        <end position="98"/>
    </location>
    <ligand>
        <name>substrate</name>
    </ligand>
</feature>
<proteinExistence type="inferred from homology"/>
<protein>
    <recommendedName>
        <fullName evidence="1">Probable cyclic pyranopterin monophosphate synthase</fullName>
        <ecNumber evidence="1">4.6.1.17</ecNumber>
    </recommendedName>
    <alternativeName>
        <fullName evidence="1">Molybdenum cofactor biosynthesis protein C</fullName>
    </alternativeName>
</protein>
<comment type="function">
    <text evidence="1">Catalyzes the conversion of (8S)-3',8-cyclo-7,8-dihydroguanosine 5'-triphosphate to cyclic pyranopterin monophosphate (cPMP).</text>
</comment>
<comment type="catalytic activity">
    <reaction evidence="1">
        <text>(8S)-3',8-cyclo-7,8-dihydroguanosine 5'-triphosphate = cyclic pyranopterin phosphate + diphosphate</text>
        <dbReference type="Rhea" id="RHEA:49580"/>
        <dbReference type="ChEBI" id="CHEBI:33019"/>
        <dbReference type="ChEBI" id="CHEBI:59648"/>
        <dbReference type="ChEBI" id="CHEBI:131766"/>
        <dbReference type="EC" id="4.6.1.17"/>
    </reaction>
</comment>
<comment type="pathway">
    <text evidence="1">Cofactor biosynthesis; molybdopterin biosynthesis.</text>
</comment>
<comment type="subunit">
    <text evidence="1">Homohexamer; trimer of dimers.</text>
</comment>
<comment type="similarity">
    <text evidence="1">Belongs to the MoaC family.</text>
</comment>
<sequence length="143" mass="15994">MINISEKAISARTATATGRIHLRRSTIQAIREKKVKKGDVLEVSRVVGTQHAKNTFLQIPYCHNIPIEGVDVDFNVGEDYVEVSCTLTTTYKTGIEMEAISCVSGALINIWDMVKYLEKDESGNYPETRIDGIHVVEKRKTPV</sequence>